<protein>
    <recommendedName>
        <fullName evidence="1">5'-nucleotidase SurE</fullName>
        <ecNumber evidence="1">3.1.3.5</ecNumber>
    </recommendedName>
    <alternativeName>
        <fullName evidence="1">Nucleoside 5'-monophosphate phosphohydrolase</fullName>
    </alternativeName>
</protein>
<evidence type="ECO:0000255" key="1">
    <source>
        <dbReference type="HAMAP-Rule" id="MF_00060"/>
    </source>
</evidence>
<reference key="1">
    <citation type="journal article" date="2007" name="Science">
        <title>Legumes symbioses: absence of nod genes in photosynthetic bradyrhizobia.</title>
        <authorList>
            <person name="Giraud E."/>
            <person name="Moulin L."/>
            <person name="Vallenet D."/>
            <person name="Barbe V."/>
            <person name="Cytryn E."/>
            <person name="Avarre J.-C."/>
            <person name="Jaubert M."/>
            <person name="Simon D."/>
            <person name="Cartieaux F."/>
            <person name="Prin Y."/>
            <person name="Bena G."/>
            <person name="Hannibal L."/>
            <person name="Fardoux J."/>
            <person name="Kojadinovic M."/>
            <person name="Vuillet L."/>
            <person name="Lajus A."/>
            <person name="Cruveiller S."/>
            <person name="Rouy Z."/>
            <person name="Mangenot S."/>
            <person name="Segurens B."/>
            <person name="Dossat C."/>
            <person name="Franck W.L."/>
            <person name="Chang W.-S."/>
            <person name="Saunders E."/>
            <person name="Bruce D."/>
            <person name="Richardson P."/>
            <person name="Normand P."/>
            <person name="Dreyfus B."/>
            <person name="Pignol D."/>
            <person name="Stacey G."/>
            <person name="Emerich D."/>
            <person name="Vermeglio A."/>
            <person name="Medigue C."/>
            <person name="Sadowsky M."/>
        </authorList>
    </citation>
    <scope>NUCLEOTIDE SEQUENCE [LARGE SCALE GENOMIC DNA]</scope>
    <source>
        <strain>ORS 278</strain>
    </source>
</reference>
<dbReference type="EC" id="3.1.3.5" evidence="1"/>
<dbReference type="EMBL" id="CU234118">
    <property type="protein sequence ID" value="CAL77794.1"/>
    <property type="molecule type" value="Genomic_DNA"/>
</dbReference>
<dbReference type="RefSeq" id="WP_011926928.1">
    <property type="nucleotide sequence ID" value="NC_009445.1"/>
</dbReference>
<dbReference type="SMR" id="A4YV68"/>
<dbReference type="STRING" id="114615.BRADO4042"/>
<dbReference type="KEGG" id="bra:BRADO4042"/>
<dbReference type="eggNOG" id="COG0496">
    <property type="taxonomic scope" value="Bacteria"/>
</dbReference>
<dbReference type="HOGENOM" id="CLU_045192_1_2_5"/>
<dbReference type="OrthoDB" id="9780815at2"/>
<dbReference type="Proteomes" id="UP000001994">
    <property type="component" value="Chromosome"/>
</dbReference>
<dbReference type="GO" id="GO:0005737">
    <property type="term" value="C:cytoplasm"/>
    <property type="evidence" value="ECO:0007669"/>
    <property type="project" value="UniProtKB-SubCell"/>
</dbReference>
<dbReference type="GO" id="GO:0008254">
    <property type="term" value="F:3'-nucleotidase activity"/>
    <property type="evidence" value="ECO:0007669"/>
    <property type="project" value="TreeGrafter"/>
</dbReference>
<dbReference type="GO" id="GO:0008253">
    <property type="term" value="F:5'-nucleotidase activity"/>
    <property type="evidence" value="ECO:0007669"/>
    <property type="project" value="UniProtKB-UniRule"/>
</dbReference>
<dbReference type="GO" id="GO:0004309">
    <property type="term" value="F:exopolyphosphatase activity"/>
    <property type="evidence" value="ECO:0007669"/>
    <property type="project" value="TreeGrafter"/>
</dbReference>
<dbReference type="GO" id="GO:0046872">
    <property type="term" value="F:metal ion binding"/>
    <property type="evidence" value="ECO:0007669"/>
    <property type="project" value="UniProtKB-UniRule"/>
</dbReference>
<dbReference type="GO" id="GO:0000166">
    <property type="term" value="F:nucleotide binding"/>
    <property type="evidence" value="ECO:0007669"/>
    <property type="project" value="UniProtKB-KW"/>
</dbReference>
<dbReference type="FunFam" id="3.40.1210.10:FF:000001">
    <property type="entry name" value="5'/3'-nucleotidase SurE"/>
    <property type="match status" value="1"/>
</dbReference>
<dbReference type="Gene3D" id="3.40.1210.10">
    <property type="entry name" value="Survival protein SurE-like phosphatase/nucleotidase"/>
    <property type="match status" value="1"/>
</dbReference>
<dbReference type="HAMAP" id="MF_00060">
    <property type="entry name" value="SurE"/>
    <property type="match status" value="1"/>
</dbReference>
<dbReference type="InterPro" id="IPR030048">
    <property type="entry name" value="SurE"/>
</dbReference>
<dbReference type="InterPro" id="IPR002828">
    <property type="entry name" value="SurE-like_Pase/nucleotidase"/>
</dbReference>
<dbReference type="InterPro" id="IPR036523">
    <property type="entry name" value="SurE-like_sf"/>
</dbReference>
<dbReference type="NCBIfam" id="NF001490">
    <property type="entry name" value="PRK00346.1-4"/>
    <property type="match status" value="1"/>
</dbReference>
<dbReference type="NCBIfam" id="TIGR00087">
    <property type="entry name" value="surE"/>
    <property type="match status" value="1"/>
</dbReference>
<dbReference type="PANTHER" id="PTHR30457">
    <property type="entry name" value="5'-NUCLEOTIDASE SURE"/>
    <property type="match status" value="1"/>
</dbReference>
<dbReference type="PANTHER" id="PTHR30457:SF12">
    <property type="entry name" value="5'_3'-NUCLEOTIDASE SURE"/>
    <property type="match status" value="1"/>
</dbReference>
<dbReference type="Pfam" id="PF01975">
    <property type="entry name" value="SurE"/>
    <property type="match status" value="1"/>
</dbReference>
<dbReference type="SUPFAM" id="SSF64167">
    <property type="entry name" value="SurE-like"/>
    <property type="match status" value="1"/>
</dbReference>
<organism>
    <name type="scientific">Bradyrhizobium sp. (strain ORS 278)</name>
    <dbReference type="NCBI Taxonomy" id="114615"/>
    <lineage>
        <taxon>Bacteria</taxon>
        <taxon>Pseudomonadati</taxon>
        <taxon>Pseudomonadota</taxon>
        <taxon>Alphaproteobacteria</taxon>
        <taxon>Hyphomicrobiales</taxon>
        <taxon>Nitrobacteraceae</taxon>
        <taxon>Bradyrhizobium</taxon>
    </lineage>
</organism>
<comment type="function">
    <text evidence="1">Nucleotidase that shows phosphatase activity on nucleoside 5'-monophosphates.</text>
</comment>
<comment type="catalytic activity">
    <reaction evidence="1">
        <text>a ribonucleoside 5'-phosphate + H2O = a ribonucleoside + phosphate</text>
        <dbReference type="Rhea" id="RHEA:12484"/>
        <dbReference type="ChEBI" id="CHEBI:15377"/>
        <dbReference type="ChEBI" id="CHEBI:18254"/>
        <dbReference type="ChEBI" id="CHEBI:43474"/>
        <dbReference type="ChEBI" id="CHEBI:58043"/>
        <dbReference type="EC" id="3.1.3.5"/>
    </reaction>
</comment>
<comment type="cofactor">
    <cofactor evidence="1">
        <name>a divalent metal cation</name>
        <dbReference type="ChEBI" id="CHEBI:60240"/>
    </cofactor>
    <text evidence="1">Binds 1 divalent metal cation per subunit.</text>
</comment>
<comment type="subcellular location">
    <subcellularLocation>
        <location evidence="1">Cytoplasm</location>
    </subcellularLocation>
</comment>
<comment type="similarity">
    <text evidence="1">Belongs to the SurE nucleotidase family.</text>
</comment>
<proteinExistence type="inferred from homology"/>
<name>SURE_BRASO</name>
<feature type="chain" id="PRO_1000007705" description="5'-nucleotidase SurE">
    <location>
        <begin position="1"/>
        <end position="255"/>
    </location>
</feature>
<feature type="binding site" evidence="1">
    <location>
        <position position="8"/>
    </location>
    <ligand>
        <name>a divalent metal cation</name>
        <dbReference type="ChEBI" id="CHEBI:60240"/>
    </ligand>
</feature>
<feature type="binding site" evidence="1">
    <location>
        <position position="9"/>
    </location>
    <ligand>
        <name>a divalent metal cation</name>
        <dbReference type="ChEBI" id="CHEBI:60240"/>
    </ligand>
</feature>
<feature type="binding site" evidence="1">
    <location>
        <position position="40"/>
    </location>
    <ligand>
        <name>a divalent metal cation</name>
        <dbReference type="ChEBI" id="CHEBI:60240"/>
    </ligand>
</feature>
<feature type="binding site" evidence="1">
    <location>
        <position position="93"/>
    </location>
    <ligand>
        <name>a divalent metal cation</name>
        <dbReference type="ChEBI" id="CHEBI:60240"/>
    </ligand>
</feature>
<keyword id="KW-0963">Cytoplasm</keyword>
<keyword id="KW-0378">Hydrolase</keyword>
<keyword id="KW-0479">Metal-binding</keyword>
<keyword id="KW-0547">Nucleotide-binding</keyword>
<keyword id="KW-1185">Reference proteome</keyword>
<accession>A4YV68</accession>
<gene>
    <name evidence="1" type="primary">surE</name>
    <name type="ordered locus">BRADO4042</name>
</gene>
<sequence length="255" mass="27543">MRILCTNDDGIHAPGLKVIEEIARALSDDVWIVAPELDQSGVSHSLSLNDPLRLREVGPRHFAVRGTPTDCVIMGARHILGEKRPDLVLSGVNKGRNVAEDVVYSGTIAGALEGTILGLPSFALSQEFSIATRDKPSWDTALKFGPQIVRKVLDAGVPKNTVINVNFPSCAPDQVKGIVVTRQGKRNLGFLKVDERRDGRGNPYFWIGFDRAAALDVPEEGTDLAALAAHYVSVTPLRLDRTDEAFSGKLGSILA</sequence>